<sequence length="431" mass="49591">MIERYSRDEMSSIWTDQNRYEAWLEVEILACEAWSELGYIPKEDVKKIRENAKVNVERAKEIEQETRHDVVAFTRQVSETLGDERKWVHYGLTSTDVVDTALSYVIKQANEILEKDLERFIDVLAAKAKKYQYTLMMGRTHGVHAEPTTFGVKMALWYTEMKRNLKRFKEVRKEIEVGKMSGAVGTFANIPPEIEAYVCEHLGIDTAAVSTQTLQRDRHAYYIATLALIATSMEKFAVEIRNLQKTETREVEEAFAKGQKGSSAMPHKRNPIGSENITGISRVIRGYITTAYENIPLWHERDISHSSAERIMLPDVTIALDYALNRFTNIVDRLTVYEDNMRNNIDKTYGLIFSQRVLLALINKGMVREEAYDKVQPKAMESWETKTPFRELIEQDSSITDVLSSEELDDCFDPKHHLNQVDTIFARAGLS</sequence>
<keyword id="KW-0456">Lyase</keyword>
<keyword id="KW-0658">Purine biosynthesis</keyword>
<keyword id="KW-1185">Reference proteome</keyword>
<reference key="1">
    <citation type="journal article" date="2005" name="J. Bacteriol.">
        <title>Insights on evolution of virulence and resistance from the complete genome analysis of an early methicillin-resistant Staphylococcus aureus strain and a biofilm-producing methicillin-resistant Staphylococcus epidermidis strain.</title>
        <authorList>
            <person name="Gill S.R."/>
            <person name="Fouts D.E."/>
            <person name="Archer G.L."/>
            <person name="Mongodin E.F."/>
            <person name="DeBoy R.T."/>
            <person name="Ravel J."/>
            <person name="Paulsen I.T."/>
            <person name="Kolonay J.F."/>
            <person name="Brinkac L.M."/>
            <person name="Beanan M.J."/>
            <person name="Dodson R.J."/>
            <person name="Daugherty S.C."/>
            <person name="Madupu R."/>
            <person name="Angiuoli S.V."/>
            <person name="Durkin A.S."/>
            <person name="Haft D.H."/>
            <person name="Vamathevan J.J."/>
            <person name="Khouri H."/>
            <person name="Utterback T.R."/>
            <person name="Lee C."/>
            <person name="Dimitrov G."/>
            <person name="Jiang L."/>
            <person name="Qin H."/>
            <person name="Weidman J."/>
            <person name="Tran K."/>
            <person name="Kang K.H."/>
            <person name="Hance I.R."/>
            <person name="Nelson K.E."/>
            <person name="Fraser C.M."/>
        </authorList>
    </citation>
    <scope>NUCLEOTIDE SEQUENCE [LARGE SCALE GENOMIC DNA]</scope>
    <source>
        <strain>ATCC 35984 / DSM 28319 / BCRC 17069 / CCUG 31568 / BM 3577 / RP62A</strain>
    </source>
</reference>
<protein>
    <recommendedName>
        <fullName>Adenylosuccinate lyase</fullName>
        <shortName>ASL</shortName>
        <ecNumber evidence="2">4.3.2.2</ecNumber>
    </recommendedName>
    <alternativeName>
        <fullName>Adenylosuccinase</fullName>
        <shortName>ASase</shortName>
    </alternativeName>
</protein>
<accession>Q5HN26</accession>
<proteinExistence type="inferred from homology"/>
<organism>
    <name type="scientific">Staphylococcus epidermidis (strain ATCC 35984 / DSM 28319 / BCRC 17069 / CCUG 31568 / BM 3577 / RP62A)</name>
    <dbReference type="NCBI Taxonomy" id="176279"/>
    <lineage>
        <taxon>Bacteria</taxon>
        <taxon>Bacillati</taxon>
        <taxon>Bacillota</taxon>
        <taxon>Bacilli</taxon>
        <taxon>Bacillales</taxon>
        <taxon>Staphylococcaceae</taxon>
        <taxon>Staphylococcus</taxon>
    </lineage>
</organism>
<gene>
    <name type="primary">purB</name>
    <name type="ordered locus">SERP1446</name>
</gene>
<feature type="chain" id="PRO_0000259983" description="Adenylosuccinate lyase">
    <location>
        <begin position="1"/>
        <end position="431"/>
    </location>
</feature>
<feature type="active site" description="Proton donor/acceptor" evidence="2">
    <location>
        <position position="141"/>
    </location>
</feature>
<feature type="active site" description="Proton donor/acceptor" evidence="2">
    <location>
        <position position="262"/>
    </location>
</feature>
<feature type="binding site" evidence="2">
    <location>
        <begin position="4"/>
        <end position="5"/>
    </location>
    <ligand>
        <name>N(6)-(1,2-dicarboxyethyl)-AMP</name>
        <dbReference type="ChEBI" id="CHEBI:57567"/>
    </ligand>
</feature>
<feature type="binding site" evidence="2">
    <location>
        <begin position="67"/>
        <end position="69"/>
    </location>
    <ligand>
        <name>N(6)-(1,2-dicarboxyethyl)-AMP</name>
        <dbReference type="ChEBI" id="CHEBI:57567"/>
    </ligand>
</feature>
<feature type="binding site" evidence="2">
    <location>
        <begin position="93"/>
        <end position="94"/>
    </location>
    <ligand>
        <name>N(6)-(1,2-dicarboxyethyl)-AMP</name>
        <dbReference type="ChEBI" id="CHEBI:57567"/>
    </ligand>
</feature>
<feature type="binding site" evidence="2">
    <location>
        <position position="212"/>
    </location>
    <ligand>
        <name>N(6)-(1,2-dicarboxyethyl)-AMP</name>
        <dbReference type="ChEBI" id="CHEBI:57567"/>
    </ligand>
</feature>
<feature type="binding site" evidence="2">
    <location>
        <position position="263"/>
    </location>
    <ligand>
        <name>N(6)-(1,2-dicarboxyethyl)-AMP</name>
        <dbReference type="ChEBI" id="CHEBI:57567"/>
    </ligand>
</feature>
<feature type="binding site" evidence="2">
    <location>
        <begin position="268"/>
        <end position="270"/>
    </location>
    <ligand>
        <name>N(6)-(1,2-dicarboxyethyl)-AMP</name>
        <dbReference type="ChEBI" id="CHEBI:57567"/>
    </ligand>
</feature>
<feature type="binding site" evidence="2">
    <location>
        <position position="276"/>
    </location>
    <ligand>
        <name>N(6)-(1,2-dicarboxyethyl)-AMP</name>
        <dbReference type="ChEBI" id="CHEBI:57567"/>
    </ligand>
</feature>
<feature type="binding site" evidence="2">
    <location>
        <begin position="307"/>
        <end position="311"/>
    </location>
    <ligand>
        <name>N(6)-(1,2-dicarboxyethyl)-AMP</name>
        <dbReference type="ChEBI" id="CHEBI:57567"/>
    </ligand>
</feature>
<evidence type="ECO:0000250" key="1"/>
<evidence type="ECO:0000250" key="2">
    <source>
        <dbReference type="UniProtKB" id="P0AB89"/>
    </source>
</evidence>
<evidence type="ECO:0000305" key="3"/>
<name>PUR8_STAEQ</name>
<comment type="function">
    <text evidence="2">Catalyzes two reactions in de novo purine nucleotide biosynthesis. Catalyzes the breakdown of 5-aminoimidazole- (N-succinylocarboxamide) ribotide (SAICAR or 2-[5-amino-1-(5-phospho-beta-D-ribosyl)imidazole-4-carboxamido]succinate) to 5-aminoimidazole-4-carboxamide ribotide (AICAR or 5-amino-1-(5-phospho-beta-D-ribosyl)imidazole-4-carboxamide) and fumarate, and of adenylosuccinate (ADS or N(6)-(1,2-dicarboxyethyl)-AMP) to adenosine monophosphate (AMP) and fumarate.</text>
</comment>
<comment type="catalytic activity">
    <reaction evidence="2">
        <text>N(6)-(1,2-dicarboxyethyl)-AMP = fumarate + AMP</text>
        <dbReference type="Rhea" id="RHEA:16853"/>
        <dbReference type="ChEBI" id="CHEBI:29806"/>
        <dbReference type="ChEBI" id="CHEBI:57567"/>
        <dbReference type="ChEBI" id="CHEBI:456215"/>
        <dbReference type="EC" id="4.3.2.2"/>
    </reaction>
    <physiologicalReaction direction="left-to-right" evidence="2">
        <dbReference type="Rhea" id="RHEA:16854"/>
    </physiologicalReaction>
</comment>
<comment type="catalytic activity">
    <reaction evidence="2">
        <text>(2S)-2-[5-amino-1-(5-phospho-beta-D-ribosyl)imidazole-4-carboxamido]succinate = 5-amino-1-(5-phospho-beta-D-ribosyl)imidazole-4-carboxamide + fumarate</text>
        <dbReference type="Rhea" id="RHEA:23920"/>
        <dbReference type="ChEBI" id="CHEBI:29806"/>
        <dbReference type="ChEBI" id="CHEBI:58443"/>
        <dbReference type="ChEBI" id="CHEBI:58475"/>
        <dbReference type="EC" id="4.3.2.2"/>
    </reaction>
    <physiologicalReaction direction="left-to-right" evidence="2">
        <dbReference type="Rhea" id="RHEA:23921"/>
    </physiologicalReaction>
</comment>
<comment type="pathway">
    <text>Purine metabolism; AMP biosynthesis via de novo pathway; AMP from IMP: step 2/2.</text>
</comment>
<comment type="pathway">
    <text>Purine metabolism; IMP biosynthesis via de novo pathway; 5-amino-1-(5-phospho-D-ribosyl)imidazole-4-carboxamide from 5-amino-1-(5-phospho-D-ribosyl)imidazole-4-carboxylate: step 2/2.</text>
</comment>
<comment type="subunit">
    <text evidence="1">Homodimer and homotetramer. Residues from neighboring subunits contribute catalytic and substrate-binding residues to each active site (By similarity).</text>
</comment>
<comment type="similarity">
    <text evidence="3">Belongs to the lyase 1 family. Adenylosuccinate lyase subfamily.</text>
</comment>
<dbReference type="EC" id="4.3.2.2" evidence="2"/>
<dbReference type="EMBL" id="CP000029">
    <property type="protein sequence ID" value="AAW54834.1"/>
    <property type="molecule type" value="Genomic_DNA"/>
</dbReference>
<dbReference type="RefSeq" id="WP_002440416.1">
    <property type="nucleotide sequence ID" value="NC_002976.3"/>
</dbReference>
<dbReference type="SMR" id="Q5HN26"/>
<dbReference type="STRING" id="176279.SERP1446"/>
<dbReference type="KEGG" id="ser:SERP1446"/>
<dbReference type="eggNOG" id="COG0015">
    <property type="taxonomic scope" value="Bacteria"/>
</dbReference>
<dbReference type="HOGENOM" id="CLU_030949_0_1_9"/>
<dbReference type="UniPathway" id="UPA00074">
    <property type="reaction ID" value="UER00132"/>
</dbReference>
<dbReference type="UniPathway" id="UPA00075">
    <property type="reaction ID" value="UER00336"/>
</dbReference>
<dbReference type="Proteomes" id="UP000000531">
    <property type="component" value="Chromosome"/>
</dbReference>
<dbReference type="GO" id="GO:0005829">
    <property type="term" value="C:cytosol"/>
    <property type="evidence" value="ECO:0007669"/>
    <property type="project" value="TreeGrafter"/>
</dbReference>
<dbReference type="GO" id="GO:0070626">
    <property type="term" value="F:(S)-2-(5-amino-1-(5-phospho-D-ribosyl)imidazole-4-carboxamido) succinate lyase (fumarate-forming) activity"/>
    <property type="evidence" value="ECO:0007669"/>
    <property type="project" value="TreeGrafter"/>
</dbReference>
<dbReference type="GO" id="GO:0004018">
    <property type="term" value="F:N6-(1,2-dicarboxyethyl)AMP AMP-lyase (fumarate-forming) activity"/>
    <property type="evidence" value="ECO:0007669"/>
    <property type="project" value="InterPro"/>
</dbReference>
<dbReference type="GO" id="GO:0044208">
    <property type="term" value="P:'de novo' AMP biosynthetic process"/>
    <property type="evidence" value="ECO:0007669"/>
    <property type="project" value="UniProtKB-UniPathway"/>
</dbReference>
<dbReference type="GO" id="GO:0006189">
    <property type="term" value="P:'de novo' IMP biosynthetic process"/>
    <property type="evidence" value="ECO:0007669"/>
    <property type="project" value="UniProtKB-UniPathway"/>
</dbReference>
<dbReference type="CDD" id="cd01360">
    <property type="entry name" value="Adenylsuccinate_lyase_1"/>
    <property type="match status" value="1"/>
</dbReference>
<dbReference type="FunFam" id="1.10.275.10:FF:000006">
    <property type="entry name" value="Adenylosuccinate lyase"/>
    <property type="match status" value="1"/>
</dbReference>
<dbReference type="FunFam" id="1.10.40.30:FF:000007">
    <property type="entry name" value="Adenylosuccinate lyase"/>
    <property type="match status" value="1"/>
</dbReference>
<dbReference type="FunFam" id="1.20.200.10:FF:000008">
    <property type="entry name" value="Adenylosuccinate lyase"/>
    <property type="match status" value="1"/>
</dbReference>
<dbReference type="Gene3D" id="1.10.40.30">
    <property type="entry name" value="Fumarase/aspartase (C-terminal domain)"/>
    <property type="match status" value="1"/>
</dbReference>
<dbReference type="Gene3D" id="1.20.200.10">
    <property type="entry name" value="Fumarase/aspartase (Central domain)"/>
    <property type="match status" value="1"/>
</dbReference>
<dbReference type="Gene3D" id="1.10.275.10">
    <property type="entry name" value="Fumarase/aspartase (N-terminal domain)"/>
    <property type="match status" value="1"/>
</dbReference>
<dbReference type="InterPro" id="IPR019468">
    <property type="entry name" value="AdenyloSucc_lyase_C"/>
</dbReference>
<dbReference type="InterPro" id="IPR024083">
    <property type="entry name" value="Fumarase/histidase_N"/>
</dbReference>
<dbReference type="InterPro" id="IPR020557">
    <property type="entry name" value="Fumarate_lyase_CS"/>
</dbReference>
<dbReference type="InterPro" id="IPR000362">
    <property type="entry name" value="Fumarate_lyase_fam"/>
</dbReference>
<dbReference type="InterPro" id="IPR022761">
    <property type="entry name" value="Fumarate_lyase_N"/>
</dbReference>
<dbReference type="InterPro" id="IPR008948">
    <property type="entry name" value="L-Aspartase-like"/>
</dbReference>
<dbReference type="InterPro" id="IPR004769">
    <property type="entry name" value="Pur_lyase"/>
</dbReference>
<dbReference type="NCBIfam" id="TIGR00928">
    <property type="entry name" value="purB"/>
    <property type="match status" value="1"/>
</dbReference>
<dbReference type="PANTHER" id="PTHR43172">
    <property type="entry name" value="ADENYLOSUCCINATE LYASE"/>
    <property type="match status" value="1"/>
</dbReference>
<dbReference type="PANTHER" id="PTHR43172:SF1">
    <property type="entry name" value="ADENYLOSUCCINATE LYASE"/>
    <property type="match status" value="1"/>
</dbReference>
<dbReference type="Pfam" id="PF10397">
    <property type="entry name" value="ADSL_C"/>
    <property type="match status" value="1"/>
</dbReference>
<dbReference type="Pfam" id="PF00206">
    <property type="entry name" value="Lyase_1"/>
    <property type="match status" value="1"/>
</dbReference>
<dbReference type="PRINTS" id="PR00145">
    <property type="entry name" value="ARGSUCLYASE"/>
</dbReference>
<dbReference type="PRINTS" id="PR00149">
    <property type="entry name" value="FUMRATELYASE"/>
</dbReference>
<dbReference type="SMART" id="SM00998">
    <property type="entry name" value="ADSL_C"/>
    <property type="match status" value="1"/>
</dbReference>
<dbReference type="SUPFAM" id="SSF48557">
    <property type="entry name" value="L-aspartase-like"/>
    <property type="match status" value="1"/>
</dbReference>
<dbReference type="PROSITE" id="PS00163">
    <property type="entry name" value="FUMARATE_LYASES"/>
    <property type="match status" value="1"/>
</dbReference>